<keyword id="KW-0963">Cytoplasm</keyword>
<keyword id="KW-0238">DNA-binding</keyword>
<keyword id="KW-1185">Reference proteome</keyword>
<proteinExistence type="inferred from homology"/>
<accession>Q13Z79</accession>
<name>Y2072_PARXL</name>
<comment type="function">
    <text evidence="1">Binds to DNA and alters its conformation. May be involved in regulation of gene expression, nucleoid organization and DNA protection.</text>
</comment>
<comment type="subunit">
    <text evidence="1">Homodimer.</text>
</comment>
<comment type="subcellular location">
    <subcellularLocation>
        <location evidence="1">Cytoplasm</location>
        <location evidence="1">Nucleoid</location>
    </subcellularLocation>
</comment>
<comment type="similarity">
    <text evidence="1">Belongs to the YbaB/EbfC family.</text>
</comment>
<gene>
    <name type="ordered locus">Bxeno_A2072</name>
    <name type="ORF">Bxe_A2360</name>
</gene>
<protein>
    <recommendedName>
        <fullName evidence="1">Nucleoid-associated protein Bxeno_A2072</fullName>
    </recommendedName>
</protein>
<evidence type="ECO:0000255" key="1">
    <source>
        <dbReference type="HAMAP-Rule" id="MF_00274"/>
    </source>
</evidence>
<evidence type="ECO:0000256" key="2">
    <source>
        <dbReference type="SAM" id="MobiDB-lite"/>
    </source>
</evidence>
<sequence>MMKGQLAGLMKQAQQMQENMKKMQEQLALIEVEGQSGAGLVKVTMTCKNDVRRVSIDPSLLADDKDMLEDLVAAAFNDAVRKAEATAQEKMGGMTSGLPLPPGFKLPF</sequence>
<reference key="1">
    <citation type="journal article" date="2006" name="Proc. Natl. Acad. Sci. U.S.A.">
        <title>Burkholderia xenovorans LB400 harbors a multi-replicon, 9.73-Mbp genome shaped for versatility.</title>
        <authorList>
            <person name="Chain P.S.G."/>
            <person name="Denef V.J."/>
            <person name="Konstantinidis K.T."/>
            <person name="Vergez L.M."/>
            <person name="Agullo L."/>
            <person name="Reyes V.L."/>
            <person name="Hauser L."/>
            <person name="Cordova M."/>
            <person name="Gomez L."/>
            <person name="Gonzalez M."/>
            <person name="Land M."/>
            <person name="Lao V."/>
            <person name="Larimer F."/>
            <person name="LiPuma J.J."/>
            <person name="Mahenthiralingam E."/>
            <person name="Malfatti S.A."/>
            <person name="Marx C.J."/>
            <person name="Parnell J.J."/>
            <person name="Ramette A."/>
            <person name="Richardson P."/>
            <person name="Seeger M."/>
            <person name="Smith D."/>
            <person name="Spilker T."/>
            <person name="Sul W.J."/>
            <person name="Tsoi T.V."/>
            <person name="Ulrich L.E."/>
            <person name="Zhulin I.B."/>
            <person name="Tiedje J.M."/>
        </authorList>
    </citation>
    <scope>NUCLEOTIDE SEQUENCE [LARGE SCALE GENOMIC DNA]</scope>
    <source>
        <strain>LB400</strain>
    </source>
</reference>
<feature type="chain" id="PRO_1000003713" description="Nucleoid-associated protein Bxeno_A2072">
    <location>
        <begin position="1"/>
        <end position="108"/>
    </location>
</feature>
<feature type="region of interest" description="Disordered" evidence="2">
    <location>
        <begin position="87"/>
        <end position="108"/>
    </location>
</feature>
<feature type="compositionally biased region" description="Pro residues" evidence="2">
    <location>
        <begin position="99"/>
        <end position="108"/>
    </location>
</feature>
<organism>
    <name type="scientific">Paraburkholderia xenovorans (strain LB400)</name>
    <dbReference type="NCBI Taxonomy" id="266265"/>
    <lineage>
        <taxon>Bacteria</taxon>
        <taxon>Pseudomonadati</taxon>
        <taxon>Pseudomonadota</taxon>
        <taxon>Betaproteobacteria</taxon>
        <taxon>Burkholderiales</taxon>
        <taxon>Burkholderiaceae</taxon>
        <taxon>Paraburkholderia</taxon>
    </lineage>
</organism>
<dbReference type="EMBL" id="CP000270">
    <property type="protein sequence ID" value="ABE30610.1"/>
    <property type="molecule type" value="Genomic_DNA"/>
</dbReference>
<dbReference type="RefSeq" id="WP_007182071.1">
    <property type="nucleotide sequence ID" value="NZ_CP008760.1"/>
</dbReference>
<dbReference type="SMR" id="Q13Z79"/>
<dbReference type="STRING" id="266265.Bxe_A2360"/>
<dbReference type="KEGG" id="bxb:DR64_64"/>
<dbReference type="KEGG" id="bxe:Bxe_A2360"/>
<dbReference type="eggNOG" id="COG0718">
    <property type="taxonomic scope" value="Bacteria"/>
</dbReference>
<dbReference type="OrthoDB" id="9808738at2"/>
<dbReference type="Proteomes" id="UP000001817">
    <property type="component" value="Chromosome 1"/>
</dbReference>
<dbReference type="GO" id="GO:0043590">
    <property type="term" value="C:bacterial nucleoid"/>
    <property type="evidence" value="ECO:0007669"/>
    <property type="project" value="UniProtKB-UniRule"/>
</dbReference>
<dbReference type="GO" id="GO:0005829">
    <property type="term" value="C:cytosol"/>
    <property type="evidence" value="ECO:0007669"/>
    <property type="project" value="TreeGrafter"/>
</dbReference>
<dbReference type="GO" id="GO:0003677">
    <property type="term" value="F:DNA binding"/>
    <property type="evidence" value="ECO:0007669"/>
    <property type="project" value="UniProtKB-UniRule"/>
</dbReference>
<dbReference type="FunFam" id="3.30.1310.10:FF:000001">
    <property type="entry name" value="Nucleoid-associated protein YbaB"/>
    <property type="match status" value="1"/>
</dbReference>
<dbReference type="Gene3D" id="3.30.1310.10">
    <property type="entry name" value="Nucleoid-associated protein YbaB-like domain"/>
    <property type="match status" value="1"/>
</dbReference>
<dbReference type="HAMAP" id="MF_00274">
    <property type="entry name" value="DNA_YbaB_EbfC"/>
    <property type="match status" value="1"/>
</dbReference>
<dbReference type="InterPro" id="IPR036894">
    <property type="entry name" value="YbaB-like_sf"/>
</dbReference>
<dbReference type="InterPro" id="IPR004401">
    <property type="entry name" value="YbaB/EbfC"/>
</dbReference>
<dbReference type="NCBIfam" id="TIGR00103">
    <property type="entry name" value="DNA_YbaB_EbfC"/>
    <property type="match status" value="1"/>
</dbReference>
<dbReference type="PANTHER" id="PTHR33449">
    <property type="entry name" value="NUCLEOID-ASSOCIATED PROTEIN YBAB"/>
    <property type="match status" value="1"/>
</dbReference>
<dbReference type="PANTHER" id="PTHR33449:SF1">
    <property type="entry name" value="NUCLEOID-ASSOCIATED PROTEIN YBAB"/>
    <property type="match status" value="1"/>
</dbReference>
<dbReference type="Pfam" id="PF02575">
    <property type="entry name" value="YbaB_DNA_bd"/>
    <property type="match status" value="1"/>
</dbReference>
<dbReference type="PIRSF" id="PIRSF004555">
    <property type="entry name" value="UCP004555"/>
    <property type="match status" value="1"/>
</dbReference>
<dbReference type="SUPFAM" id="SSF82607">
    <property type="entry name" value="YbaB-like"/>
    <property type="match status" value="1"/>
</dbReference>